<feature type="chain" id="PRO_1000188268" description="Erythronate-4-phosphate dehydrogenase">
    <location>
        <begin position="1"/>
        <end position="378"/>
    </location>
</feature>
<feature type="active site" evidence="1">
    <location>
        <position position="208"/>
    </location>
</feature>
<feature type="active site" evidence="1">
    <location>
        <position position="237"/>
    </location>
</feature>
<feature type="active site" description="Proton donor" evidence="1">
    <location>
        <position position="254"/>
    </location>
</feature>
<feature type="binding site" evidence="1">
    <location>
        <position position="45"/>
    </location>
    <ligand>
        <name>substrate</name>
    </ligand>
</feature>
<feature type="binding site" evidence="1">
    <location>
        <position position="66"/>
    </location>
    <ligand>
        <name>substrate</name>
    </ligand>
</feature>
<feature type="binding site" evidence="1">
    <location>
        <position position="146"/>
    </location>
    <ligand>
        <name>NAD(+)</name>
        <dbReference type="ChEBI" id="CHEBI:57540"/>
    </ligand>
</feature>
<feature type="binding site" evidence="1">
    <location>
        <position position="175"/>
    </location>
    <ligand>
        <name>NAD(+)</name>
        <dbReference type="ChEBI" id="CHEBI:57540"/>
    </ligand>
</feature>
<feature type="binding site" evidence="1">
    <location>
        <position position="232"/>
    </location>
    <ligand>
        <name>NAD(+)</name>
        <dbReference type="ChEBI" id="CHEBI:57540"/>
    </ligand>
</feature>
<feature type="binding site" evidence="1">
    <location>
        <position position="257"/>
    </location>
    <ligand>
        <name>NAD(+)</name>
        <dbReference type="ChEBI" id="CHEBI:57540"/>
    </ligand>
</feature>
<feature type="binding site" evidence="1">
    <location>
        <position position="258"/>
    </location>
    <ligand>
        <name>substrate</name>
    </ligand>
</feature>
<comment type="function">
    <text evidence="1">Catalyzes the oxidation of erythronate-4-phosphate to 3-hydroxy-2-oxo-4-phosphonooxybutanoate.</text>
</comment>
<comment type="catalytic activity">
    <reaction evidence="1">
        <text>4-phospho-D-erythronate + NAD(+) = (R)-3-hydroxy-2-oxo-4-phosphooxybutanoate + NADH + H(+)</text>
        <dbReference type="Rhea" id="RHEA:18829"/>
        <dbReference type="ChEBI" id="CHEBI:15378"/>
        <dbReference type="ChEBI" id="CHEBI:57540"/>
        <dbReference type="ChEBI" id="CHEBI:57945"/>
        <dbReference type="ChEBI" id="CHEBI:58538"/>
        <dbReference type="ChEBI" id="CHEBI:58766"/>
        <dbReference type="EC" id="1.1.1.290"/>
    </reaction>
</comment>
<comment type="pathway">
    <text evidence="1">Cofactor biosynthesis; pyridoxine 5'-phosphate biosynthesis; pyridoxine 5'-phosphate from D-erythrose 4-phosphate: step 2/5.</text>
</comment>
<comment type="subunit">
    <text evidence="1">Homodimer.</text>
</comment>
<comment type="subcellular location">
    <subcellularLocation>
        <location evidence="1">Cytoplasm</location>
    </subcellularLocation>
</comment>
<comment type="similarity">
    <text evidence="1">Belongs to the D-isomer specific 2-hydroxyacid dehydrogenase family. PdxB subfamily.</text>
</comment>
<keyword id="KW-0963">Cytoplasm</keyword>
<keyword id="KW-0520">NAD</keyword>
<keyword id="KW-0560">Oxidoreductase</keyword>
<keyword id="KW-0664">Pyridoxine biosynthesis</keyword>
<reference key="1">
    <citation type="journal article" date="2008" name="J. Bacteriol.">
        <title>Insights into the environmental resistance gene pool from the genome sequence of the multidrug-resistant environmental isolate Escherichia coli SMS-3-5.</title>
        <authorList>
            <person name="Fricke W.F."/>
            <person name="Wright M.S."/>
            <person name="Lindell A.H."/>
            <person name="Harkins D.M."/>
            <person name="Baker-Austin C."/>
            <person name="Ravel J."/>
            <person name="Stepanauskas R."/>
        </authorList>
    </citation>
    <scope>NUCLEOTIDE SEQUENCE [LARGE SCALE GENOMIC DNA]</scope>
    <source>
        <strain>SMS-3-5 / SECEC</strain>
    </source>
</reference>
<sequence length="378" mass="41347">MKILVDENMPYARDLFSRLGEVTAVPGRPIPVAQLADADALMVRSVTKVNESLLAGKPIKFVGTATAGTDHVDEAWLKQAGIGFSAAPGCNAIAVVEYVFSSLLMLAERDGFSLHERTVGIVGVGNVGRRLQARLEALGIKTLLCDPPRADRGDEGDFRSLDELVQHADILTFHTPLFKDGPYKTLHLADEKLIRSLKPGAILINACRGAVVDNTALLTCLNEGQKLSVVLDVWEGEPELNVELLKKVDIGTPHIAGYTLEGKARGTTQVFEAYSKFIGHEQHVALDTLLPAPEFGRITLHGPLDQPTLKRLVHLVYDVRRDDAPLRKVAGIPGEFDKLRKNYLERREWSSLYVICDDASAASLLCKLGFNAVHHPAR</sequence>
<evidence type="ECO:0000255" key="1">
    <source>
        <dbReference type="HAMAP-Rule" id="MF_01825"/>
    </source>
</evidence>
<organism>
    <name type="scientific">Escherichia coli (strain SMS-3-5 / SECEC)</name>
    <dbReference type="NCBI Taxonomy" id="439855"/>
    <lineage>
        <taxon>Bacteria</taxon>
        <taxon>Pseudomonadati</taxon>
        <taxon>Pseudomonadota</taxon>
        <taxon>Gammaproteobacteria</taxon>
        <taxon>Enterobacterales</taxon>
        <taxon>Enterobacteriaceae</taxon>
        <taxon>Escherichia</taxon>
    </lineage>
</organism>
<gene>
    <name evidence="1" type="primary">pdxB</name>
    <name type="ordered locus">EcSMS35_2476</name>
</gene>
<proteinExistence type="inferred from homology"/>
<dbReference type="EC" id="1.1.1.290" evidence="1"/>
<dbReference type="EMBL" id="CP000970">
    <property type="protein sequence ID" value="ACB17370.1"/>
    <property type="molecule type" value="Genomic_DNA"/>
</dbReference>
<dbReference type="RefSeq" id="WP_000699135.1">
    <property type="nucleotide sequence ID" value="NC_010498.1"/>
</dbReference>
<dbReference type="SMR" id="B1LLS6"/>
<dbReference type="KEGG" id="ecm:EcSMS35_2476"/>
<dbReference type="HOGENOM" id="CLU_019796_4_0_6"/>
<dbReference type="UniPathway" id="UPA00244">
    <property type="reaction ID" value="UER00310"/>
</dbReference>
<dbReference type="Proteomes" id="UP000007011">
    <property type="component" value="Chromosome"/>
</dbReference>
<dbReference type="GO" id="GO:0005829">
    <property type="term" value="C:cytosol"/>
    <property type="evidence" value="ECO:0007669"/>
    <property type="project" value="TreeGrafter"/>
</dbReference>
<dbReference type="GO" id="GO:0033711">
    <property type="term" value="F:4-phosphoerythronate dehydrogenase activity"/>
    <property type="evidence" value="ECO:0007669"/>
    <property type="project" value="UniProtKB-EC"/>
</dbReference>
<dbReference type="GO" id="GO:0051287">
    <property type="term" value="F:NAD binding"/>
    <property type="evidence" value="ECO:0007669"/>
    <property type="project" value="InterPro"/>
</dbReference>
<dbReference type="GO" id="GO:0046983">
    <property type="term" value="F:protein dimerization activity"/>
    <property type="evidence" value="ECO:0007669"/>
    <property type="project" value="InterPro"/>
</dbReference>
<dbReference type="GO" id="GO:0036001">
    <property type="term" value="P:'de novo' pyridoxal 5'-phosphate biosynthetic process"/>
    <property type="evidence" value="ECO:0007669"/>
    <property type="project" value="TreeGrafter"/>
</dbReference>
<dbReference type="GO" id="GO:0008615">
    <property type="term" value="P:pyridoxine biosynthetic process"/>
    <property type="evidence" value="ECO:0007669"/>
    <property type="project" value="UniProtKB-UniRule"/>
</dbReference>
<dbReference type="CDD" id="cd12158">
    <property type="entry name" value="ErythrP_dh"/>
    <property type="match status" value="1"/>
</dbReference>
<dbReference type="FunFam" id="3.30.1370.170:FF:000001">
    <property type="entry name" value="Erythronate-4-phosphate dehydrogenase"/>
    <property type="match status" value="1"/>
</dbReference>
<dbReference type="FunFam" id="3.40.50.720:FF:000093">
    <property type="entry name" value="Erythronate-4-phosphate dehydrogenase"/>
    <property type="match status" value="1"/>
</dbReference>
<dbReference type="Gene3D" id="3.30.1370.170">
    <property type="match status" value="1"/>
</dbReference>
<dbReference type="Gene3D" id="3.40.50.720">
    <property type="entry name" value="NAD(P)-binding Rossmann-like Domain"/>
    <property type="match status" value="2"/>
</dbReference>
<dbReference type="HAMAP" id="MF_01825">
    <property type="entry name" value="PdxB"/>
    <property type="match status" value="1"/>
</dbReference>
<dbReference type="InterPro" id="IPR006139">
    <property type="entry name" value="D-isomer_2_OHA_DH_cat_dom"/>
</dbReference>
<dbReference type="InterPro" id="IPR029753">
    <property type="entry name" value="D-isomer_DH_CS"/>
</dbReference>
<dbReference type="InterPro" id="IPR029752">
    <property type="entry name" value="D-isomer_DH_CS1"/>
</dbReference>
<dbReference type="InterPro" id="IPR006140">
    <property type="entry name" value="D-isomer_DH_NAD-bd"/>
</dbReference>
<dbReference type="InterPro" id="IPR020921">
    <property type="entry name" value="Erythronate-4-P_DHase"/>
</dbReference>
<dbReference type="InterPro" id="IPR024531">
    <property type="entry name" value="Erythronate-4-P_DHase_dimer"/>
</dbReference>
<dbReference type="InterPro" id="IPR036291">
    <property type="entry name" value="NAD(P)-bd_dom_sf"/>
</dbReference>
<dbReference type="InterPro" id="IPR038251">
    <property type="entry name" value="PdxB_dimer_sf"/>
</dbReference>
<dbReference type="NCBIfam" id="NF001309">
    <property type="entry name" value="PRK00257.1"/>
    <property type="match status" value="1"/>
</dbReference>
<dbReference type="NCBIfam" id="NF011966">
    <property type="entry name" value="PRK15438.1"/>
    <property type="match status" value="1"/>
</dbReference>
<dbReference type="PANTHER" id="PTHR42938">
    <property type="entry name" value="FORMATE DEHYDROGENASE 1"/>
    <property type="match status" value="1"/>
</dbReference>
<dbReference type="PANTHER" id="PTHR42938:SF9">
    <property type="entry name" value="FORMATE DEHYDROGENASE 1"/>
    <property type="match status" value="1"/>
</dbReference>
<dbReference type="Pfam" id="PF00389">
    <property type="entry name" value="2-Hacid_dh"/>
    <property type="match status" value="1"/>
</dbReference>
<dbReference type="Pfam" id="PF02826">
    <property type="entry name" value="2-Hacid_dh_C"/>
    <property type="match status" value="1"/>
</dbReference>
<dbReference type="Pfam" id="PF11890">
    <property type="entry name" value="DUF3410"/>
    <property type="match status" value="1"/>
</dbReference>
<dbReference type="SUPFAM" id="SSF52283">
    <property type="entry name" value="Formate/glycerate dehydrogenase catalytic domain-like"/>
    <property type="match status" value="1"/>
</dbReference>
<dbReference type="SUPFAM" id="SSF51735">
    <property type="entry name" value="NAD(P)-binding Rossmann-fold domains"/>
    <property type="match status" value="1"/>
</dbReference>
<dbReference type="PROSITE" id="PS00065">
    <property type="entry name" value="D_2_HYDROXYACID_DH_1"/>
    <property type="match status" value="1"/>
</dbReference>
<dbReference type="PROSITE" id="PS00671">
    <property type="entry name" value="D_2_HYDROXYACID_DH_3"/>
    <property type="match status" value="1"/>
</dbReference>
<name>PDXB_ECOSM</name>
<accession>B1LLS6</accession>
<protein>
    <recommendedName>
        <fullName evidence="1">Erythronate-4-phosphate dehydrogenase</fullName>
        <ecNumber evidence="1">1.1.1.290</ecNumber>
    </recommendedName>
</protein>